<comment type="function">
    <text evidence="1">May act as a general Rab protein regulator.</text>
</comment>
<comment type="subcellular location">
    <subcellularLocation>
        <location evidence="3">Membrane</location>
        <topology evidence="3">Multi-pass membrane protein</topology>
    </subcellularLocation>
</comment>
<comment type="similarity">
    <text evidence="3">Belongs to the PRA1 family.</text>
</comment>
<accession>Q54NS7</accession>
<accession>C7G033</accession>
<name>PRAFB_DICDI</name>
<proteinExistence type="inferred from homology"/>
<organism>
    <name type="scientific">Dictyostelium discoideum</name>
    <name type="common">Social amoeba</name>
    <dbReference type="NCBI Taxonomy" id="44689"/>
    <lineage>
        <taxon>Eukaryota</taxon>
        <taxon>Amoebozoa</taxon>
        <taxon>Evosea</taxon>
        <taxon>Eumycetozoa</taxon>
        <taxon>Dictyostelia</taxon>
        <taxon>Dictyosteliales</taxon>
        <taxon>Dictyosteliaceae</taxon>
        <taxon>Dictyostelium</taxon>
    </lineage>
</organism>
<dbReference type="EMBL" id="AAFI02000073">
    <property type="protein sequence ID" value="EEU04086.1"/>
    <property type="molecule type" value="Genomic_DNA"/>
</dbReference>
<dbReference type="RefSeq" id="XP_002649138.1">
    <property type="nucleotide sequence ID" value="XM_002649092.1"/>
</dbReference>
<dbReference type="FunCoup" id="Q54NS7">
    <property type="interactions" value="162"/>
</dbReference>
<dbReference type="STRING" id="44689.Q54NS7"/>
<dbReference type="TCDB" id="9.A.49.1.10">
    <property type="family name" value="the prenylated rab acceptor protein 1 (pra1) family"/>
</dbReference>
<dbReference type="PaxDb" id="44689-DDB0304558"/>
<dbReference type="EnsemblProtists" id="EEU04086">
    <property type="protein sequence ID" value="EEU04086"/>
    <property type="gene ID" value="DDB_G0285007"/>
</dbReference>
<dbReference type="GeneID" id="8624907"/>
<dbReference type="KEGG" id="ddi:DDB_G0285007"/>
<dbReference type="dictyBase" id="DDB_G0285007">
    <property type="gene designation" value="prafB"/>
</dbReference>
<dbReference type="VEuPathDB" id="AmoebaDB:DDB_G0285007"/>
<dbReference type="eggNOG" id="ENOG502RHMD">
    <property type="taxonomic scope" value="Eukaryota"/>
</dbReference>
<dbReference type="HOGENOM" id="CLU_1672526_0_0_1"/>
<dbReference type="InParanoid" id="Q54NS7"/>
<dbReference type="OMA" id="ITRMEDN"/>
<dbReference type="PhylomeDB" id="Q54NS7"/>
<dbReference type="PRO" id="PR:Q54NS7"/>
<dbReference type="Proteomes" id="UP000002195">
    <property type="component" value="Chromosome 4"/>
</dbReference>
<dbReference type="GO" id="GO:0005794">
    <property type="term" value="C:Golgi apparatus"/>
    <property type="evidence" value="ECO:0000318"/>
    <property type="project" value="GO_Central"/>
</dbReference>
<dbReference type="GO" id="GO:0016020">
    <property type="term" value="C:membrane"/>
    <property type="evidence" value="ECO:0007669"/>
    <property type="project" value="UniProtKB-SubCell"/>
</dbReference>
<dbReference type="InterPro" id="IPR004895">
    <property type="entry name" value="Prenylated_rab_accept_PRA1"/>
</dbReference>
<dbReference type="PANTHER" id="PTHR19317:SF93">
    <property type="entry name" value="PRA1 FAMILY PROTEIN 2"/>
    <property type="match status" value="1"/>
</dbReference>
<dbReference type="PANTHER" id="PTHR19317">
    <property type="entry name" value="PRENYLATED RAB ACCEPTOR 1-RELATED"/>
    <property type="match status" value="1"/>
</dbReference>
<dbReference type="Pfam" id="PF03208">
    <property type="entry name" value="PRA1"/>
    <property type="match status" value="1"/>
</dbReference>
<sequence length="158" mass="17605">MSSSSSIKLQPWNDFIEWGRYSIPGSQNAITRMEDNLNFYSGNYIAIVAVVLLITLFTNMNLLVAILLLGAIGYYLFFVQKGDKNIGFAVLTPMIQMVILGVVSVIVIYKLSGLTLFYTTLVSLLFVLAHSALKMRNLKNKASNFVSGIKNDLKNELK</sequence>
<keyword id="KW-0472">Membrane</keyword>
<keyword id="KW-1185">Reference proteome</keyword>
<keyword id="KW-0812">Transmembrane</keyword>
<keyword id="KW-1133">Transmembrane helix</keyword>
<reference key="1">
    <citation type="journal article" date="2005" name="Nature">
        <title>The genome of the social amoeba Dictyostelium discoideum.</title>
        <authorList>
            <person name="Eichinger L."/>
            <person name="Pachebat J.A."/>
            <person name="Gloeckner G."/>
            <person name="Rajandream M.A."/>
            <person name="Sucgang R."/>
            <person name="Berriman M."/>
            <person name="Song J."/>
            <person name="Olsen R."/>
            <person name="Szafranski K."/>
            <person name="Xu Q."/>
            <person name="Tunggal B."/>
            <person name="Kummerfeld S."/>
            <person name="Madera M."/>
            <person name="Konfortov B.A."/>
            <person name="Rivero F."/>
            <person name="Bankier A.T."/>
            <person name="Lehmann R."/>
            <person name="Hamlin N."/>
            <person name="Davies R."/>
            <person name="Gaudet P."/>
            <person name="Fey P."/>
            <person name="Pilcher K."/>
            <person name="Chen G."/>
            <person name="Saunders D."/>
            <person name="Sodergren E.J."/>
            <person name="Davis P."/>
            <person name="Kerhornou A."/>
            <person name="Nie X."/>
            <person name="Hall N."/>
            <person name="Anjard C."/>
            <person name="Hemphill L."/>
            <person name="Bason N."/>
            <person name="Farbrother P."/>
            <person name="Desany B."/>
            <person name="Just E."/>
            <person name="Morio T."/>
            <person name="Rost R."/>
            <person name="Churcher C.M."/>
            <person name="Cooper J."/>
            <person name="Haydock S."/>
            <person name="van Driessche N."/>
            <person name="Cronin A."/>
            <person name="Goodhead I."/>
            <person name="Muzny D.M."/>
            <person name="Mourier T."/>
            <person name="Pain A."/>
            <person name="Lu M."/>
            <person name="Harper D."/>
            <person name="Lindsay R."/>
            <person name="Hauser H."/>
            <person name="James K.D."/>
            <person name="Quiles M."/>
            <person name="Madan Babu M."/>
            <person name="Saito T."/>
            <person name="Buchrieser C."/>
            <person name="Wardroper A."/>
            <person name="Felder M."/>
            <person name="Thangavelu M."/>
            <person name="Johnson D."/>
            <person name="Knights A."/>
            <person name="Loulseged H."/>
            <person name="Mungall K.L."/>
            <person name="Oliver K."/>
            <person name="Price C."/>
            <person name="Quail M.A."/>
            <person name="Urushihara H."/>
            <person name="Hernandez J."/>
            <person name="Rabbinowitsch E."/>
            <person name="Steffen D."/>
            <person name="Sanders M."/>
            <person name="Ma J."/>
            <person name="Kohara Y."/>
            <person name="Sharp S."/>
            <person name="Simmonds M.N."/>
            <person name="Spiegler S."/>
            <person name="Tivey A."/>
            <person name="Sugano S."/>
            <person name="White B."/>
            <person name="Walker D."/>
            <person name="Woodward J.R."/>
            <person name="Winckler T."/>
            <person name="Tanaka Y."/>
            <person name="Shaulsky G."/>
            <person name="Schleicher M."/>
            <person name="Weinstock G.M."/>
            <person name="Rosenthal A."/>
            <person name="Cox E.C."/>
            <person name="Chisholm R.L."/>
            <person name="Gibbs R.A."/>
            <person name="Loomis W.F."/>
            <person name="Platzer M."/>
            <person name="Kay R.R."/>
            <person name="Williams J.G."/>
            <person name="Dear P.H."/>
            <person name="Noegel A.A."/>
            <person name="Barrell B.G."/>
            <person name="Kuspa A."/>
        </authorList>
    </citation>
    <scope>NUCLEOTIDE SEQUENCE [LARGE SCALE GENOMIC DNA]</scope>
    <source>
        <strain>AX4</strain>
    </source>
</reference>
<protein>
    <recommendedName>
        <fullName>PRA1 family protein 2</fullName>
    </recommendedName>
</protein>
<feature type="chain" id="PRO_0000340241" description="PRA1 family protein 2">
    <location>
        <begin position="1"/>
        <end position="158"/>
    </location>
</feature>
<feature type="transmembrane region" description="Helical" evidence="2">
    <location>
        <begin position="36"/>
        <end position="58"/>
    </location>
</feature>
<feature type="transmembrane region" description="Helical" evidence="2">
    <location>
        <begin position="62"/>
        <end position="79"/>
    </location>
</feature>
<feature type="transmembrane region" description="Helical" evidence="2">
    <location>
        <begin position="88"/>
        <end position="108"/>
    </location>
</feature>
<feature type="transmembrane region" description="Helical" evidence="2">
    <location>
        <begin position="113"/>
        <end position="133"/>
    </location>
</feature>
<evidence type="ECO:0000250" key="1"/>
<evidence type="ECO:0000255" key="2"/>
<evidence type="ECO:0000305" key="3"/>
<gene>
    <name type="primary">prafB</name>
    <name type="ORF">DDB_G0285007</name>
</gene>